<protein>
    <recommendedName>
        <fullName>Gas vesicle protein L2</fullName>
        <shortName>GvpL2</shortName>
    </recommendedName>
</protein>
<geneLocation type="plasmid">
    <name>pNRC200</name>
</geneLocation>
<evidence type="ECO:0000250" key="1">
    <source>
        <dbReference type="UniProtKB" id="Q9HI27"/>
    </source>
</evidence>
<evidence type="ECO:0000269" key="2">
    <source>
    </source>
</evidence>
<evidence type="ECO:0000269" key="3">
    <source>
    </source>
</evidence>
<evidence type="ECO:0000269" key="4">
    <source>
    </source>
</evidence>
<evidence type="ECO:0000269" key="5">
    <source>
    </source>
</evidence>
<evidence type="ECO:0000303" key="6">
    <source>
    </source>
</evidence>
<evidence type="ECO:0000305" key="7"/>
<evidence type="ECO:0000312" key="8">
    <source>
        <dbReference type="EMBL" id="AAG20886.1"/>
    </source>
</evidence>
<evidence type="ECO:0000312" key="9">
    <source>
        <dbReference type="EMBL" id="CAA45985.1"/>
    </source>
</evidence>
<evidence type="ECO:0000312" key="10">
    <source>
        <dbReference type="EMBL" id="CAA64351.1"/>
    </source>
</evidence>
<sequence length="279" mass="30376">MTPAQSQARAQLSDGRYVYCVVDTTSVPSASVGETTGIDDETVRVVSVDGVGAVVHDCTSVYDADDIDQVKRWLVTHQQVVDDVSDVFGTPLPMRFDTVFAGGDSALTDWLADTHPRLRTELDGFAGCWEYRVTLLWDPQPFEAHVTATDDTLQALEARQAEADAGTTFLLEKQYDARLAERRRARRSALASDLSAAVEPVATQVASQDTTTSLRDESVSERHTPIARLAVLAPETDESALGSQLDDIAARDGVTIRFTGPWPPYTFAPDICTDEPNQA</sequence>
<dbReference type="EMBL" id="X64730">
    <property type="protein sequence ID" value="CAA45985.1"/>
    <property type="molecule type" value="Genomic_DNA"/>
</dbReference>
<dbReference type="EMBL" id="X94688">
    <property type="protein sequence ID" value="CAA64351.1"/>
    <property type="molecule type" value="Genomic_DNA"/>
</dbReference>
<dbReference type="EMBL" id="AE004438">
    <property type="protein sequence ID" value="AAG20886.1"/>
    <property type="status" value="ALT_INIT"/>
    <property type="molecule type" value="Genomic_DNA"/>
</dbReference>
<dbReference type="SMR" id="Q9HHU0"/>
<dbReference type="KEGG" id="hal:VNG_6229G"/>
<dbReference type="PATRIC" id="fig|64091.14.peg.2234"/>
<dbReference type="HOGENOM" id="CLU_1451390_0_0_2"/>
<dbReference type="InParanoid" id="Q9HHU0"/>
<dbReference type="OrthoDB" id="350702at2157"/>
<dbReference type="Proteomes" id="UP000000554">
    <property type="component" value="Plasmid pNRC200"/>
</dbReference>
<dbReference type="GO" id="GO:0031411">
    <property type="term" value="C:gas vesicle"/>
    <property type="evidence" value="ECO:0007669"/>
    <property type="project" value="UniProtKB-SubCell"/>
</dbReference>
<dbReference type="GO" id="GO:0031412">
    <property type="term" value="P:gas vesicle organization"/>
    <property type="evidence" value="ECO:0007669"/>
    <property type="project" value="InterPro"/>
</dbReference>
<dbReference type="InterPro" id="IPR054796">
    <property type="entry name" value="Gas_vesic_GvpL"/>
</dbReference>
<dbReference type="InterPro" id="IPR009430">
    <property type="entry name" value="GvpL/GvpF"/>
</dbReference>
<dbReference type="NCBIfam" id="NF045778">
    <property type="entry name" value="gas_vesic_GvpL"/>
    <property type="match status" value="1"/>
</dbReference>
<dbReference type="PANTHER" id="PTHR36852">
    <property type="entry name" value="PROTEIN GVPL 2"/>
    <property type="match status" value="1"/>
</dbReference>
<dbReference type="PANTHER" id="PTHR36852:SF1">
    <property type="entry name" value="PROTEIN GVPL 2"/>
    <property type="match status" value="1"/>
</dbReference>
<dbReference type="Pfam" id="PF06386">
    <property type="entry name" value="GvpL_GvpF"/>
    <property type="match status" value="1"/>
</dbReference>
<feature type="chain" id="PRO_0000182700" description="Gas vesicle protein L2">
    <location>
        <begin position="1"/>
        <end position="279"/>
    </location>
</feature>
<feature type="sequence conflict" description="In Ref. 1; CAA45985 and 2; CAA64351." evidence="7" ref="1 2">
    <original>P</original>
    <variation>L</variation>
    <location>
        <position position="3"/>
    </location>
</feature>
<feature type="sequence conflict" description="In Ref. 1; CAA45985 and 2; CAA64351." evidence="7" ref="1 2">
    <original>D</original>
    <variation>A</variation>
    <location>
        <position position="104"/>
    </location>
</feature>
<feature type="sequence conflict" description="In Ref. 1; CAA45985 and 2; CAA64351." evidence="7" ref="1 2">
    <original>RRRA</original>
    <variation>AAGDVG</variation>
    <location>
        <begin position="182"/>
        <end position="185"/>
    </location>
</feature>
<feature type="sequence conflict" description="In Ref. 1; CAA45985 and 2; CAA64351." evidence="7" ref="1 2">
    <original>ALASDLSAAVEPVATQVA</original>
    <variation>PVTCPQPSNRSPPRW</variation>
    <location>
        <begin position="189"/>
        <end position="206"/>
    </location>
</feature>
<feature type="sequence conflict" description="In Ref. 1; CAA45985 and 2; CAA64351." evidence="7" ref="1 2">
    <original>T</original>
    <variation>S</variation>
    <location>
        <position position="259"/>
    </location>
</feature>
<feature type="sequence conflict" description="In Ref. 1; CAA45985 and 2; CAA64351." evidence="7" ref="1 2">
    <original>DICTDEPNQA</original>
    <variation>AHLYR</variation>
    <location>
        <begin position="270"/>
        <end position="279"/>
    </location>
</feature>
<proteinExistence type="evidence at protein level"/>
<reference evidence="9" key="1">
    <citation type="journal article" date="1992" name="J. Mol. Biol.">
        <title>Three different but related gene clusters encoding gas vesicles in halophilic archaea.</title>
        <authorList>
            <person name="Englert C."/>
            <person name="Krueger K."/>
            <person name="Offner S."/>
            <person name="Pfeifer F."/>
        </authorList>
    </citation>
    <scope>NUCLEOTIDE SEQUENCE [GENOMIC DNA]</scope>
    <scope>GAS VESICLE GENE CLUSTER</scope>
    <source>
        <strain>NRC-817</strain>
    </source>
</reference>
<reference evidence="10" key="2">
    <citation type="journal article" date="1996" name="J. Bacteriol.">
        <title>Transcript analysis of the c-vac region and differential synthesis of the two regulatory gas vesicle proteins GvpD and GvpE in Halobacterium salinarium PHH4.</title>
        <authorList>
            <person name="Krueger K."/>
            <person name="Pfeifer F."/>
        </authorList>
    </citation>
    <scope>NUCLEOTIDE SEQUENCE [GENOMIC DNA]</scope>
    <scope>INDUCTION</scope>
    <source>
        <strain>PHH1 /PHH4</strain>
    </source>
</reference>
<reference evidence="8" key="3">
    <citation type="journal article" date="2000" name="Proc. Natl. Acad. Sci. U.S.A.">
        <title>Genome sequence of Halobacterium species NRC-1.</title>
        <authorList>
            <person name="Ng W.V."/>
            <person name="Kennedy S.P."/>
            <person name="Mahairas G.G."/>
            <person name="Berquist B."/>
            <person name="Pan M."/>
            <person name="Shukla H.D."/>
            <person name="Lasky S.R."/>
            <person name="Baliga N.S."/>
            <person name="Thorsson V."/>
            <person name="Sbrogna J."/>
            <person name="Swartzell S."/>
            <person name="Weir D."/>
            <person name="Hall J."/>
            <person name="Dahl T.A."/>
            <person name="Welti R."/>
            <person name="Goo Y.A."/>
            <person name="Leithauser B."/>
            <person name="Keller K."/>
            <person name="Cruz R."/>
            <person name="Danson M.J."/>
            <person name="Hough D.W."/>
            <person name="Maddocks D.G."/>
            <person name="Jablonski P.E."/>
            <person name="Krebs M.P."/>
            <person name="Angevine C.M."/>
            <person name="Dale H."/>
            <person name="Isenbarger T.A."/>
            <person name="Peck R.F."/>
            <person name="Pohlschroder M."/>
            <person name="Spudich J.L."/>
            <person name="Jung K.-H."/>
            <person name="Alam M."/>
            <person name="Freitas T."/>
            <person name="Hou S."/>
            <person name="Daniels C.J."/>
            <person name="Dennis P.P."/>
            <person name="Omer A.D."/>
            <person name="Ebhardt H."/>
            <person name="Lowe T.M."/>
            <person name="Liang P."/>
            <person name="Riley M."/>
            <person name="Hood L."/>
            <person name="DasSarma S."/>
        </authorList>
    </citation>
    <scope>NUCLEOTIDE SEQUENCE [LARGE SCALE GENOMIC DNA]</scope>
    <source>
        <strain>ATCC 700922 / JCM 11081 / NRC-1</strain>
        <plasmid>pNRC200</plasmid>
    </source>
</reference>
<reference key="4">
    <citation type="journal article" date="1997" name="Microbiology">
        <title>Growth competition between Halobacterium salinarium strain PHH1 and mutants affected in gas vesicle synthesis.</title>
        <authorList>
            <person name="Beard S.J."/>
            <person name="Hayes P.K."/>
            <person name="Walsby A.E."/>
        </authorList>
    </citation>
    <scope>FUNCTION IN BUOYANCY</scope>
    <scope>POSSIBLE INDUCTION BY OXYGEN LIMITATION</scope>
    <source>
        <strain>PHH1</strain>
    </source>
</reference>
<reference key="5">
    <citation type="journal article" date="1998" name="Microbiology">
        <title>Structural characteristics of halobacterial gas vesicles.</title>
        <authorList>
            <person name="Offner S."/>
            <person name="Ziese U."/>
            <person name="Wanner G."/>
            <person name="Typke D."/>
            <person name="Pfeifer F."/>
        </authorList>
    </citation>
    <scope>FUNCTION</scope>
    <source>
        <strain>PHH1</strain>
    </source>
</reference>
<organism>
    <name type="scientific">Halobacterium salinarum (strain ATCC 700922 / JCM 11081 / NRC-1)</name>
    <name type="common">Halobacterium halobium</name>
    <dbReference type="NCBI Taxonomy" id="64091"/>
    <lineage>
        <taxon>Archaea</taxon>
        <taxon>Methanobacteriati</taxon>
        <taxon>Methanobacteriota</taxon>
        <taxon>Stenosarchaea group</taxon>
        <taxon>Halobacteria</taxon>
        <taxon>Halobacteriales</taxon>
        <taxon>Halobacteriaceae</taxon>
        <taxon>Halobacterium</taxon>
        <taxon>Halobacterium salinarum NRC-34001</taxon>
    </lineage>
</organism>
<comment type="function">
    <text evidence="1 3">Proteins GvpF to GvpM might be involved in nucleating gas vesicle formation. A minor component of the gas vesicle (By similarity). Gas vesicles are hollow, gas filled proteinaceous nanostructures found in several microbial planktonic microorganisms. They allow positioning of halobacteria at the optimal depth for growth in the poorly aerated, shallow brine pools of their habitat (PubMed:33711860).</text>
</comment>
<comment type="function">
    <text evidence="5">Expression of 2 c-vac DNA fragments containing 2 divergently transcribed regions (gvpE-gvpF-gvpG-gvpH-gvpI-gvpJ-gvpK-gvpL-gvpM and gvpA-gvpC-gvpN-gvpO) allows H.volcanii to produce gas vesicles.</text>
</comment>
<comment type="subunit">
    <text evidence="1">GvpF to GvpM interact with each other in vitro, and may form multi-subunit complex(es). Interacts with GvpC, GvpN and GvpO.</text>
</comment>
<comment type="subcellular location">
    <subcellularLocation>
        <location evidence="1">Gas vesicle</location>
    </subcellularLocation>
</comment>
<comment type="induction">
    <text evidence="3 4">In PHH4 (a deletion of the p-vac locus) transcribed in all growth phases, maximal expression in mid-stationary phase. An unstable 6kb transcript able to cover gvpD-gvpE-gvpF-gvpG-gvpH-gvpI-gvpJ-gvpK-gvpL-gvpM is detected, as well as smaller transcripts (PubMed:8763925). Gas vesicles appear earlier when grown in static culture, possibly due to O(2)-limitation (PubMed:33711860).</text>
</comment>
<comment type="miscellaneous">
    <text evidence="2 4">Encoded in a 14-gene locus called c-vac which produces cylindrical gas vesicles only in the stationary growth phase.</text>
</comment>
<comment type="similarity">
    <text evidence="7">Belongs to the gas vesicle GvpF/GvpL family.</text>
</comment>
<comment type="sequence caution" evidence="7">
    <conflict type="erroneous initiation">
        <sequence resource="EMBL-CDS" id="AAG20886"/>
    </conflict>
    <text>Truncated N-terminus.</text>
</comment>
<keyword id="KW-0304">Gas vesicle</keyword>
<keyword id="KW-0614">Plasmid</keyword>
<keyword id="KW-1185">Reference proteome</keyword>
<name>GVPL2_HALSA</name>
<gene>
    <name evidence="8" type="primary">gvpL2</name>
    <name evidence="6" type="synonym">c-gvpL</name>
    <name evidence="8" type="ordered locus">VNG_6229G</name>
</gene>
<accession>Q9HHU0</accession>
<accession>P33964</accession>